<organism>
    <name type="scientific">Pasteurella multocida (strain Pm70)</name>
    <dbReference type="NCBI Taxonomy" id="272843"/>
    <lineage>
        <taxon>Bacteria</taxon>
        <taxon>Pseudomonadati</taxon>
        <taxon>Pseudomonadota</taxon>
        <taxon>Gammaproteobacteria</taxon>
        <taxon>Pasteurellales</taxon>
        <taxon>Pasteurellaceae</taxon>
        <taxon>Pasteurella</taxon>
    </lineage>
</organism>
<proteinExistence type="inferred from homology"/>
<dbReference type="EC" id="6.3.1.21" evidence="1"/>
<dbReference type="EMBL" id="AE004439">
    <property type="protein sequence ID" value="AAK03137.1"/>
    <property type="molecule type" value="Genomic_DNA"/>
</dbReference>
<dbReference type="RefSeq" id="WP_005757170.1">
    <property type="nucleotide sequence ID" value="NC_002663.1"/>
</dbReference>
<dbReference type="SMR" id="Q9CLZ5"/>
<dbReference type="STRING" id="272843.PM1053"/>
<dbReference type="EnsemblBacteria" id="AAK03137">
    <property type="protein sequence ID" value="AAK03137"/>
    <property type="gene ID" value="PM1053"/>
</dbReference>
<dbReference type="GeneID" id="77206369"/>
<dbReference type="KEGG" id="pmu:PM1053"/>
<dbReference type="PATRIC" id="fig|272843.6.peg.1067"/>
<dbReference type="HOGENOM" id="CLU_011534_1_3_6"/>
<dbReference type="OrthoDB" id="9804625at2"/>
<dbReference type="UniPathway" id="UPA00074">
    <property type="reaction ID" value="UER00127"/>
</dbReference>
<dbReference type="Proteomes" id="UP000000809">
    <property type="component" value="Chromosome"/>
</dbReference>
<dbReference type="GO" id="GO:0005829">
    <property type="term" value="C:cytosol"/>
    <property type="evidence" value="ECO:0007669"/>
    <property type="project" value="TreeGrafter"/>
</dbReference>
<dbReference type="GO" id="GO:0005524">
    <property type="term" value="F:ATP binding"/>
    <property type="evidence" value="ECO:0007669"/>
    <property type="project" value="UniProtKB-UniRule"/>
</dbReference>
<dbReference type="GO" id="GO:0000287">
    <property type="term" value="F:magnesium ion binding"/>
    <property type="evidence" value="ECO:0007669"/>
    <property type="project" value="InterPro"/>
</dbReference>
<dbReference type="GO" id="GO:0043815">
    <property type="term" value="F:phosphoribosylglycinamide formyltransferase 2 activity"/>
    <property type="evidence" value="ECO:0007669"/>
    <property type="project" value="UniProtKB-UniRule"/>
</dbReference>
<dbReference type="GO" id="GO:0004644">
    <property type="term" value="F:phosphoribosylglycinamide formyltransferase activity"/>
    <property type="evidence" value="ECO:0007669"/>
    <property type="project" value="InterPro"/>
</dbReference>
<dbReference type="GO" id="GO:0006189">
    <property type="term" value="P:'de novo' IMP biosynthetic process"/>
    <property type="evidence" value="ECO:0007669"/>
    <property type="project" value="UniProtKB-UniRule"/>
</dbReference>
<dbReference type="FunFam" id="3.30.1490.20:FF:000013">
    <property type="entry name" value="Formate-dependent phosphoribosylglycinamide formyltransferase"/>
    <property type="match status" value="1"/>
</dbReference>
<dbReference type="FunFam" id="3.30.470.20:FF:000027">
    <property type="entry name" value="Formate-dependent phosphoribosylglycinamide formyltransferase"/>
    <property type="match status" value="1"/>
</dbReference>
<dbReference type="FunFam" id="3.40.50.20:FF:000007">
    <property type="entry name" value="Formate-dependent phosphoribosylglycinamide formyltransferase"/>
    <property type="match status" value="1"/>
</dbReference>
<dbReference type="Gene3D" id="3.40.50.20">
    <property type="match status" value="1"/>
</dbReference>
<dbReference type="Gene3D" id="3.30.1490.20">
    <property type="entry name" value="ATP-grasp fold, A domain"/>
    <property type="match status" value="1"/>
</dbReference>
<dbReference type="Gene3D" id="3.30.470.20">
    <property type="entry name" value="ATP-grasp fold, B domain"/>
    <property type="match status" value="1"/>
</dbReference>
<dbReference type="HAMAP" id="MF_01643">
    <property type="entry name" value="PurT"/>
    <property type="match status" value="1"/>
</dbReference>
<dbReference type="InterPro" id="IPR011761">
    <property type="entry name" value="ATP-grasp"/>
</dbReference>
<dbReference type="InterPro" id="IPR003135">
    <property type="entry name" value="ATP-grasp_carboxylate-amine"/>
</dbReference>
<dbReference type="InterPro" id="IPR013815">
    <property type="entry name" value="ATP_grasp_subdomain_1"/>
</dbReference>
<dbReference type="InterPro" id="IPR016185">
    <property type="entry name" value="PreATP-grasp_dom_sf"/>
</dbReference>
<dbReference type="InterPro" id="IPR005862">
    <property type="entry name" value="PurT"/>
</dbReference>
<dbReference type="InterPro" id="IPR054350">
    <property type="entry name" value="PurT/PurK_preATP-grasp"/>
</dbReference>
<dbReference type="InterPro" id="IPR048740">
    <property type="entry name" value="PurT_C"/>
</dbReference>
<dbReference type="InterPro" id="IPR011054">
    <property type="entry name" value="Rudment_hybrid_motif"/>
</dbReference>
<dbReference type="NCBIfam" id="NF006766">
    <property type="entry name" value="PRK09288.1"/>
    <property type="match status" value="1"/>
</dbReference>
<dbReference type="NCBIfam" id="TIGR01142">
    <property type="entry name" value="purT"/>
    <property type="match status" value="1"/>
</dbReference>
<dbReference type="PANTHER" id="PTHR43055">
    <property type="entry name" value="FORMATE-DEPENDENT PHOSPHORIBOSYLGLYCINAMIDE FORMYLTRANSFERASE"/>
    <property type="match status" value="1"/>
</dbReference>
<dbReference type="PANTHER" id="PTHR43055:SF1">
    <property type="entry name" value="FORMATE-DEPENDENT PHOSPHORIBOSYLGLYCINAMIDE FORMYLTRANSFERASE"/>
    <property type="match status" value="1"/>
</dbReference>
<dbReference type="Pfam" id="PF02222">
    <property type="entry name" value="ATP-grasp"/>
    <property type="match status" value="1"/>
</dbReference>
<dbReference type="Pfam" id="PF21244">
    <property type="entry name" value="PurT_C"/>
    <property type="match status" value="1"/>
</dbReference>
<dbReference type="Pfam" id="PF22660">
    <property type="entry name" value="RS_preATP-grasp-like"/>
    <property type="match status" value="1"/>
</dbReference>
<dbReference type="SUPFAM" id="SSF56059">
    <property type="entry name" value="Glutathione synthetase ATP-binding domain-like"/>
    <property type="match status" value="1"/>
</dbReference>
<dbReference type="SUPFAM" id="SSF52440">
    <property type="entry name" value="PreATP-grasp domain"/>
    <property type="match status" value="1"/>
</dbReference>
<dbReference type="SUPFAM" id="SSF51246">
    <property type="entry name" value="Rudiment single hybrid motif"/>
    <property type="match status" value="1"/>
</dbReference>
<dbReference type="PROSITE" id="PS50975">
    <property type="entry name" value="ATP_GRASP"/>
    <property type="match status" value="1"/>
</dbReference>
<gene>
    <name evidence="1" type="primary">purT</name>
    <name type="synonym">pur</name>
    <name type="ordered locus">PM1053</name>
</gene>
<feature type="chain" id="PRO_0000319192" description="Formate-dependent phosphoribosylglycinamide formyltransferase">
    <location>
        <begin position="1"/>
        <end position="393"/>
    </location>
</feature>
<feature type="domain" description="ATP-grasp" evidence="1">
    <location>
        <begin position="119"/>
        <end position="308"/>
    </location>
</feature>
<feature type="binding site" evidence="1">
    <location>
        <begin position="22"/>
        <end position="23"/>
    </location>
    <ligand>
        <name>N(1)-(5-phospho-beta-D-ribosyl)glycinamide</name>
        <dbReference type="ChEBI" id="CHEBI:143788"/>
    </ligand>
</feature>
<feature type="binding site" evidence="1">
    <location>
        <position position="82"/>
    </location>
    <ligand>
        <name>N(1)-(5-phospho-beta-D-ribosyl)glycinamide</name>
        <dbReference type="ChEBI" id="CHEBI:143788"/>
    </ligand>
</feature>
<feature type="binding site" evidence="1">
    <location>
        <position position="114"/>
    </location>
    <ligand>
        <name>ATP</name>
        <dbReference type="ChEBI" id="CHEBI:30616"/>
    </ligand>
</feature>
<feature type="binding site" evidence="1">
    <location>
        <position position="155"/>
    </location>
    <ligand>
        <name>ATP</name>
        <dbReference type="ChEBI" id="CHEBI:30616"/>
    </ligand>
</feature>
<feature type="binding site" evidence="1">
    <location>
        <begin position="160"/>
        <end position="165"/>
    </location>
    <ligand>
        <name>ATP</name>
        <dbReference type="ChEBI" id="CHEBI:30616"/>
    </ligand>
</feature>
<feature type="binding site" evidence="1">
    <location>
        <begin position="195"/>
        <end position="198"/>
    </location>
    <ligand>
        <name>ATP</name>
        <dbReference type="ChEBI" id="CHEBI:30616"/>
    </ligand>
</feature>
<feature type="binding site" evidence="1">
    <location>
        <position position="203"/>
    </location>
    <ligand>
        <name>ATP</name>
        <dbReference type="ChEBI" id="CHEBI:30616"/>
    </ligand>
</feature>
<feature type="binding site" evidence="1">
    <location>
        <position position="267"/>
    </location>
    <ligand>
        <name>Mg(2+)</name>
        <dbReference type="ChEBI" id="CHEBI:18420"/>
    </ligand>
</feature>
<feature type="binding site" evidence="1">
    <location>
        <position position="279"/>
    </location>
    <ligand>
        <name>Mg(2+)</name>
        <dbReference type="ChEBI" id="CHEBI:18420"/>
    </ligand>
</feature>
<feature type="binding site" evidence="1">
    <location>
        <position position="286"/>
    </location>
    <ligand>
        <name>N(1)-(5-phospho-beta-D-ribosyl)glycinamide</name>
        <dbReference type="ChEBI" id="CHEBI:143788"/>
    </ligand>
</feature>
<feature type="binding site" evidence="1">
    <location>
        <position position="356"/>
    </location>
    <ligand>
        <name>N(1)-(5-phospho-beta-D-ribosyl)glycinamide</name>
        <dbReference type="ChEBI" id="CHEBI:143788"/>
    </ligand>
</feature>
<feature type="binding site" evidence="1">
    <location>
        <begin position="363"/>
        <end position="364"/>
    </location>
    <ligand>
        <name>N(1)-(5-phospho-beta-D-ribosyl)glycinamide</name>
        <dbReference type="ChEBI" id="CHEBI:143788"/>
    </ligand>
</feature>
<comment type="function">
    <text evidence="1">Involved in the de novo purine biosynthesis. Catalyzes the transfer of formate to 5-phospho-ribosyl-glycinamide (GAR), producing 5-phospho-ribosyl-N-formylglycinamide (FGAR). Formate is provided by PurU via hydrolysis of 10-formyl-tetrahydrofolate.</text>
</comment>
<comment type="catalytic activity">
    <reaction evidence="1">
        <text>N(1)-(5-phospho-beta-D-ribosyl)glycinamide + formate + ATP = N(2)-formyl-N(1)-(5-phospho-beta-D-ribosyl)glycinamide + ADP + phosphate + H(+)</text>
        <dbReference type="Rhea" id="RHEA:24829"/>
        <dbReference type="ChEBI" id="CHEBI:15378"/>
        <dbReference type="ChEBI" id="CHEBI:15740"/>
        <dbReference type="ChEBI" id="CHEBI:30616"/>
        <dbReference type="ChEBI" id="CHEBI:43474"/>
        <dbReference type="ChEBI" id="CHEBI:143788"/>
        <dbReference type="ChEBI" id="CHEBI:147286"/>
        <dbReference type="ChEBI" id="CHEBI:456216"/>
        <dbReference type="EC" id="6.3.1.21"/>
    </reaction>
    <physiologicalReaction direction="left-to-right" evidence="1">
        <dbReference type="Rhea" id="RHEA:24830"/>
    </physiologicalReaction>
</comment>
<comment type="pathway">
    <text evidence="1">Purine metabolism; IMP biosynthesis via de novo pathway; N(2)-formyl-N(1)-(5-phospho-D-ribosyl)glycinamide from N(1)-(5-phospho-D-ribosyl)glycinamide (formate route): step 1/1.</text>
</comment>
<comment type="subunit">
    <text evidence="1">Homodimer.</text>
</comment>
<comment type="similarity">
    <text evidence="1">Belongs to the PurK/PurT family.</text>
</comment>
<reference key="1">
    <citation type="journal article" date="2001" name="Proc. Natl. Acad. Sci. U.S.A.">
        <title>Complete genomic sequence of Pasteurella multocida Pm70.</title>
        <authorList>
            <person name="May B.J."/>
            <person name="Zhang Q."/>
            <person name="Li L.L."/>
            <person name="Paustian M.L."/>
            <person name="Whittam T.S."/>
            <person name="Kapur V."/>
        </authorList>
    </citation>
    <scope>NUCLEOTIDE SEQUENCE [LARGE SCALE GENOMIC DNA]</scope>
    <source>
        <strain>Pm70</strain>
    </source>
</reference>
<sequence>MTTIGTPLTPKATKVMMLGSGELGKEVVIELQRLGVEVIAVDRYANAPAQQVAHRAYTISMLDGEALKALVEKEKPDYIVPEVEAIATATLVELEQAGFTVIPTAKATQLTMNREGIRRLAAEELGLPTSNYQFVDNFDDFKRAVEKIGIPCVVKPIMSSSGHGQSILKSVEQIPSAWEYAQQGGRAGAGRVIVEGFVKFDYEITLLTVRHVHGTSFLAPIGHIQIDGDYRESWQPQAMSAVALEKAQAIAEKITGALGGRGIFGVEMFVCGDEVIFNEVSPRPHDTGMVTLISQELSEFALHARAILGLPIPDITLISPSASKAIVVEGKSTQVVFGQLAEVLAEPHTNLRLFGKGEVDGHRRMGVILARDISVEKALEKARRAYDKLEIAL</sequence>
<keyword id="KW-0067">ATP-binding</keyword>
<keyword id="KW-0436">Ligase</keyword>
<keyword id="KW-0460">Magnesium</keyword>
<keyword id="KW-0479">Metal-binding</keyword>
<keyword id="KW-0547">Nucleotide-binding</keyword>
<keyword id="KW-0658">Purine biosynthesis</keyword>
<keyword id="KW-1185">Reference proteome</keyword>
<accession>Q9CLZ5</accession>
<name>PURT_PASMU</name>
<protein>
    <recommendedName>
        <fullName evidence="1">Formate-dependent phosphoribosylglycinamide formyltransferase</fullName>
        <ecNumber evidence="1">6.3.1.21</ecNumber>
    </recommendedName>
    <alternativeName>
        <fullName evidence="1">5'-phosphoribosylglycinamide transformylase 2</fullName>
    </alternativeName>
    <alternativeName>
        <fullName evidence="1">Formate-dependent GAR transformylase</fullName>
    </alternativeName>
    <alternativeName>
        <fullName evidence="1">GAR transformylase 2</fullName>
        <shortName evidence="1">GART 2</shortName>
    </alternativeName>
    <alternativeName>
        <fullName evidence="1">Non-folate glycinamide ribonucleotide transformylase</fullName>
    </alternativeName>
    <alternativeName>
        <fullName evidence="1">Phosphoribosylglycinamide formyltransferase 2</fullName>
    </alternativeName>
</protein>
<evidence type="ECO:0000255" key="1">
    <source>
        <dbReference type="HAMAP-Rule" id="MF_01643"/>
    </source>
</evidence>